<evidence type="ECO:0000255" key="1">
    <source>
        <dbReference type="HAMAP-Rule" id="MF_00004"/>
    </source>
</evidence>
<proteinExistence type="inferred from homology"/>
<organism>
    <name type="scientific">Paracidovorax citrulli (strain AAC00-1)</name>
    <name type="common">Acidovorax citrulli</name>
    <dbReference type="NCBI Taxonomy" id="397945"/>
    <lineage>
        <taxon>Bacteria</taxon>
        <taxon>Pseudomonadati</taxon>
        <taxon>Pseudomonadota</taxon>
        <taxon>Betaproteobacteria</taxon>
        <taxon>Burkholderiales</taxon>
        <taxon>Comamonadaceae</taxon>
        <taxon>Paracidovorax</taxon>
    </lineage>
</organism>
<sequence length="184" mass="20270">MQDLSVNEYLRQYIRTVPDWPAAGVQFRDITPLLQDPKVFRVLIDAFVHRYMDRALRPDVVAGLDARGFILGAVVAYELNVGFVPIRKKGKLPFTTVEETYELEYGSATVELHADAVKPGDRVLLIDDLIATGGTMMAGRRLLERLGATVTEGAAIVDLPELGGSSRLRESGLPLYTLVDFAGH</sequence>
<accession>A1TWI0</accession>
<comment type="function">
    <text evidence="1">Catalyzes a salvage reaction resulting in the formation of AMP, that is energically less costly than de novo synthesis.</text>
</comment>
<comment type="catalytic activity">
    <reaction evidence="1">
        <text>AMP + diphosphate = 5-phospho-alpha-D-ribose 1-diphosphate + adenine</text>
        <dbReference type="Rhea" id="RHEA:16609"/>
        <dbReference type="ChEBI" id="CHEBI:16708"/>
        <dbReference type="ChEBI" id="CHEBI:33019"/>
        <dbReference type="ChEBI" id="CHEBI:58017"/>
        <dbReference type="ChEBI" id="CHEBI:456215"/>
        <dbReference type="EC" id="2.4.2.7"/>
    </reaction>
</comment>
<comment type="pathway">
    <text evidence="1">Purine metabolism; AMP biosynthesis via salvage pathway; AMP from adenine: step 1/1.</text>
</comment>
<comment type="subunit">
    <text evidence="1">Homodimer.</text>
</comment>
<comment type="subcellular location">
    <subcellularLocation>
        <location evidence="1">Cytoplasm</location>
    </subcellularLocation>
</comment>
<comment type="similarity">
    <text evidence="1">Belongs to the purine/pyrimidine phosphoribosyltransferase family.</text>
</comment>
<name>APT_PARC0</name>
<protein>
    <recommendedName>
        <fullName evidence="1">Adenine phosphoribosyltransferase</fullName>
        <shortName evidence="1">APRT</shortName>
        <ecNumber evidence="1">2.4.2.7</ecNumber>
    </recommendedName>
</protein>
<keyword id="KW-0963">Cytoplasm</keyword>
<keyword id="KW-0328">Glycosyltransferase</keyword>
<keyword id="KW-0660">Purine salvage</keyword>
<keyword id="KW-0808">Transferase</keyword>
<gene>
    <name evidence="1" type="primary">apt</name>
    <name type="ordered locus">Aave_4787</name>
</gene>
<reference key="1">
    <citation type="submission" date="2006-12" db="EMBL/GenBank/DDBJ databases">
        <title>Complete sequence of Acidovorax avenae subsp. citrulli AAC00-1.</title>
        <authorList>
            <person name="Copeland A."/>
            <person name="Lucas S."/>
            <person name="Lapidus A."/>
            <person name="Barry K."/>
            <person name="Detter J.C."/>
            <person name="Glavina del Rio T."/>
            <person name="Dalin E."/>
            <person name="Tice H."/>
            <person name="Pitluck S."/>
            <person name="Kiss H."/>
            <person name="Brettin T."/>
            <person name="Bruce D."/>
            <person name="Han C."/>
            <person name="Tapia R."/>
            <person name="Gilna P."/>
            <person name="Schmutz J."/>
            <person name="Larimer F."/>
            <person name="Land M."/>
            <person name="Hauser L."/>
            <person name="Kyrpides N."/>
            <person name="Kim E."/>
            <person name="Stahl D."/>
            <person name="Richardson P."/>
        </authorList>
    </citation>
    <scope>NUCLEOTIDE SEQUENCE [LARGE SCALE GENOMIC DNA]</scope>
    <source>
        <strain>AAC00-1</strain>
    </source>
</reference>
<dbReference type="EC" id="2.4.2.7" evidence="1"/>
<dbReference type="EMBL" id="CP000512">
    <property type="protein sequence ID" value="ABM35318.1"/>
    <property type="molecule type" value="Genomic_DNA"/>
</dbReference>
<dbReference type="RefSeq" id="WP_011797784.1">
    <property type="nucleotide sequence ID" value="NC_008752.1"/>
</dbReference>
<dbReference type="SMR" id="A1TWI0"/>
<dbReference type="STRING" id="397945.Aave_4787"/>
<dbReference type="GeneID" id="79789785"/>
<dbReference type="KEGG" id="aav:Aave_4787"/>
<dbReference type="eggNOG" id="COG0503">
    <property type="taxonomic scope" value="Bacteria"/>
</dbReference>
<dbReference type="HOGENOM" id="CLU_063339_3_0_4"/>
<dbReference type="OrthoDB" id="9803963at2"/>
<dbReference type="UniPathway" id="UPA00588">
    <property type="reaction ID" value="UER00646"/>
</dbReference>
<dbReference type="Proteomes" id="UP000002596">
    <property type="component" value="Chromosome"/>
</dbReference>
<dbReference type="GO" id="GO:0005737">
    <property type="term" value="C:cytoplasm"/>
    <property type="evidence" value="ECO:0007669"/>
    <property type="project" value="UniProtKB-SubCell"/>
</dbReference>
<dbReference type="GO" id="GO:0002055">
    <property type="term" value="F:adenine binding"/>
    <property type="evidence" value="ECO:0007669"/>
    <property type="project" value="TreeGrafter"/>
</dbReference>
<dbReference type="GO" id="GO:0003999">
    <property type="term" value="F:adenine phosphoribosyltransferase activity"/>
    <property type="evidence" value="ECO:0007669"/>
    <property type="project" value="UniProtKB-UniRule"/>
</dbReference>
<dbReference type="GO" id="GO:0016208">
    <property type="term" value="F:AMP binding"/>
    <property type="evidence" value="ECO:0007669"/>
    <property type="project" value="TreeGrafter"/>
</dbReference>
<dbReference type="GO" id="GO:0006168">
    <property type="term" value="P:adenine salvage"/>
    <property type="evidence" value="ECO:0007669"/>
    <property type="project" value="InterPro"/>
</dbReference>
<dbReference type="GO" id="GO:0044209">
    <property type="term" value="P:AMP salvage"/>
    <property type="evidence" value="ECO:0007669"/>
    <property type="project" value="UniProtKB-UniRule"/>
</dbReference>
<dbReference type="GO" id="GO:0006166">
    <property type="term" value="P:purine ribonucleoside salvage"/>
    <property type="evidence" value="ECO:0007669"/>
    <property type="project" value="UniProtKB-KW"/>
</dbReference>
<dbReference type="CDD" id="cd06223">
    <property type="entry name" value="PRTases_typeI"/>
    <property type="match status" value="1"/>
</dbReference>
<dbReference type="FunFam" id="3.40.50.2020:FF:000021">
    <property type="entry name" value="Adenine phosphoribosyltransferase"/>
    <property type="match status" value="1"/>
</dbReference>
<dbReference type="Gene3D" id="3.40.50.2020">
    <property type="match status" value="1"/>
</dbReference>
<dbReference type="HAMAP" id="MF_00004">
    <property type="entry name" value="Aden_phosphoribosyltr"/>
    <property type="match status" value="1"/>
</dbReference>
<dbReference type="InterPro" id="IPR005764">
    <property type="entry name" value="Ade_phspho_trans"/>
</dbReference>
<dbReference type="InterPro" id="IPR000836">
    <property type="entry name" value="PRibTrfase_dom"/>
</dbReference>
<dbReference type="InterPro" id="IPR029057">
    <property type="entry name" value="PRTase-like"/>
</dbReference>
<dbReference type="InterPro" id="IPR050054">
    <property type="entry name" value="UPRTase/APRTase"/>
</dbReference>
<dbReference type="NCBIfam" id="TIGR01090">
    <property type="entry name" value="apt"/>
    <property type="match status" value="1"/>
</dbReference>
<dbReference type="NCBIfam" id="NF002634">
    <property type="entry name" value="PRK02304.1-3"/>
    <property type="match status" value="1"/>
</dbReference>
<dbReference type="NCBIfam" id="NF002636">
    <property type="entry name" value="PRK02304.1-5"/>
    <property type="match status" value="1"/>
</dbReference>
<dbReference type="PANTHER" id="PTHR32315">
    <property type="entry name" value="ADENINE PHOSPHORIBOSYLTRANSFERASE"/>
    <property type="match status" value="1"/>
</dbReference>
<dbReference type="PANTHER" id="PTHR32315:SF3">
    <property type="entry name" value="ADENINE PHOSPHORIBOSYLTRANSFERASE"/>
    <property type="match status" value="1"/>
</dbReference>
<dbReference type="Pfam" id="PF00156">
    <property type="entry name" value="Pribosyltran"/>
    <property type="match status" value="1"/>
</dbReference>
<dbReference type="SUPFAM" id="SSF53271">
    <property type="entry name" value="PRTase-like"/>
    <property type="match status" value="1"/>
</dbReference>
<dbReference type="PROSITE" id="PS00103">
    <property type="entry name" value="PUR_PYR_PR_TRANSFER"/>
    <property type="match status" value="1"/>
</dbReference>
<feature type="chain" id="PRO_0000321330" description="Adenine phosphoribosyltransferase">
    <location>
        <begin position="1"/>
        <end position="184"/>
    </location>
</feature>